<protein>
    <recommendedName>
        <fullName evidence="3">Small ribosomal subunit protein bS1</fullName>
    </recommendedName>
    <alternativeName>
        <fullName>30S ribosomal protein S1</fullName>
    </alternativeName>
</protein>
<accession>P37985</accession>
<accession>E0SMZ5</accession>
<proteinExistence type="inferred from homology"/>
<organism>
    <name type="scientific">Dickeya dadantii (strain 3937)</name>
    <name type="common">Erwinia chrysanthemi (strain 3937)</name>
    <dbReference type="NCBI Taxonomy" id="198628"/>
    <lineage>
        <taxon>Bacteria</taxon>
        <taxon>Pseudomonadati</taxon>
        <taxon>Pseudomonadota</taxon>
        <taxon>Gammaproteobacteria</taxon>
        <taxon>Enterobacterales</taxon>
        <taxon>Pectobacteriaceae</taxon>
        <taxon>Dickeya</taxon>
    </lineage>
</organism>
<evidence type="ECO:0000250" key="1"/>
<evidence type="ECO:0000255" key="2">
    <source>
        <dbReference type="PROSITE-ProRule" id="PRU00180"/>
    </source>
</evidence>
<evidence type="ECO:0000305" key="3"/>
<feature type="chain" id="PRO_0000196036" description="Small ribosomal subunit protein bS1">
    <location>
        <begin position="1"/>
        <end position="557"/>
    </location>
</feature>
<feature type="domain" description="S1 motif 1" evidence="2">
    <location>
        <begin position="21"/>
        <end position="87"/>
    </location>
</feature>
<feature type="domain" description="S1 motif 2" evidence="2">
    <location>
        <begin position="105"/>
        <end position="171"/>
    </location>
</feature>
<feature type="domain" description="S1 motif 3" evidence="2">
    <location>
        <begin position="192"/>
        <end position="260"/>
    </location>
</feature>
<feature type="domain" description="S1 motif 4" evidence="2">
    <location>
        <begin position="277"/>
        <end position="347"/>
    </location>
</feature>
<feature type="domain" description="S1 motif 5" evidence="2">
    <location>
        <begin position="364"/>
        <end position="434"/>
    </location>
</feature>
<feature type="domain" description="S1 motif 6" evidence="2">
    <location>
        <begin position="451"/>
        <end position="520"/>
    </location>
</feature>
<feature type="sequence conflict" description="In Ref. 2; CAA52769." evidence="3" ref="2">
    <original>A</original>
    <variation>S</variation>
    <location>
        <position position="553"/>
    </location>
</feature>
<reference key="1">
    <citation type="journal article" date="2011" name="J. Bacteriol.">
        <title>Genome sequence of the plant-pathogenic bacterium Dickeya dadantii 3937.</title>
        <authorList>
            <person name="Glasner J.D."/>
            <person name="Yang C.H."/>
            <person name="Reverchon S."/>
            <person name="Hugouvieux-Cotte-Pattat N."/>
            <person name="Condemine G."/>
            <person name="Bohin J.P."/>
            <person name="Van Gijsegem F."/>
            <person name="Yang S."/>
            <person name="Franza T."/>
            <person name="Expert D."/>
            <person name="Plunkett G. III"/>
            <person name="San Francisco M.J."/>
            <person name="Charkowski A.O."/>
            <person name="Py B."/>
            <person name="Bell K."/>
            <person name="Rauscher L."/>
            <person name="Rodriguez-Palenzuela P."/>
            <person name="Toussaint A."/>
            <person name="Holeva M.C."/>
            <person name="He S.Y."/>
            <person name="Douet V."/>
            <person name="Boccara M."/>
            <person name="Blanco C."/>
            <person name="Toth I."/>
            <person name="Anderson B.D."/>
            <person name="Biehl B.S."/>
            <person name="Mau B."/>
            <person name="Flynn S.M."/>
            <person name="Barras F."/>
            <person name="Lindeberg M."/>
            <person name="Birch P.R."/>
            <person name="Tsuyumu S."/>
            <person name="Shi X."/>
            <person name="Hibbing M."/>
            <person name="Yap M.N."/>
            <person name="Carpentier M."/>
            <person name="Dassa E."/>
            <person name="Umehara M."/>
            <person name="Kim J.F."/>
            <person name="Rusch M."/>
            <person name="Soni P."/>
            <person name="Mayhew G.F."/>
            <person name="Fouts D.E."/>
            <person name="Gill S.R."/>
            <person name="Blattner F.R."/>
            <person name="Keen N.T."/>
            <person name="Perna N.T."/>
        </authorList>
    </citation>
    <scope>NUCLEOTIDE SEQUENCE [LARGE SCALE GENOMIC DNA]</scope>
    <source>
        <strain>3937</strain>
    </source>
</reference>
<reference key="2">
    <citation type="submission" date="1993-08" db="EMBL/GenBank/DDBJ databases">
        <authorList>
            <person name="Douillie A."/>
            <person name="Toussaint A."/>
            <person name="Faelen M."/>
        </authorList>
    </citation>
    <scope>NUCLEOTIDE SEQUENCE [GENOMIC DNA] OF 550-557</scope>
    <source>
        <strain>3937</strain>
    </source>
</reference>
<sequence>MTESFAQLFEESLKEIETRPGSIVRGVVVAIDKDVVLVDAGLKSESAIPVEQFKNAQGEIEIQVGDEVDVALDAVEDGFGETLLSREKAKRHEAWLMLEKAYEESATVTGVINGKVKGGFTVELNGIRAFLPGSLVDVRPVRDTLHLEGKELEFKVIKLDQKRNNVVVSRRAVIESENSAERDQLLENLQEGMEVKGIVKNLTDYGAFVDLGGVDGLLHITDMAWKRVKHPSEIVNVGDEITVKVLKFDRERTRVSLGLKQLGEDPWVAIAKRYPEGTKLTGRVTNLTDYGCFVEIEEGVEGLVHVSEMDWTNKNIHPSKVVNVGDVVEVMVLDIDEERRRISLGLKQCKANPWQQFAETHNKGDRVEGKIKSITDFGIFIGLDGGIDGLVHLSDISWNVAGEEAVREYKKGDEIAAVVLQVDAERERISLGVKQLAEDPFNNYLSVNKKGAIVTGKVTAVDAKGATVELADGVEGYLRASEASRDRIEDATLVMSVGDEIEAKYTGVDRKNRVVSLSIRAKDEADEKDAIASVNNKQEEGNFSNAMAEAFKAAKGE</sequence>
<dbReference type="EMBL" id="CP002038">
    <property type="protein sequence ID" value="ADM98265.1"/>
    <property type="molecule type" value="Genomic_DNA"/>
</dbReference>
<dbReference type="EMBL" id="X74750">
    <property type="protein sequence ID" value="CAA52769.1"/>
    <property type="molecule type" value="Genomic_DNA"/>
</dbReference>
<dbReference type="PIR" id="S37141">
    <property type="entry name" value="S37141"/>
</dbReference>
<dbReference type="SMR" id="P37985"/>
<dbReference type="STRING" id="198628.Dda3937_04328"/>
<dbReference type="KEGG" id="ddd:Dda3937_04328"/>
<dbReference type="PATRIC" id="fig|198628.6.peg.2035"/>
<dbReference type="eggNOG" id="COG0539">
    <property type="taxonomic scope" value="Bacteria"/>
</dbReference>
<dbReference type="HOGENOM" id="CLU_015805_2_1_6"/>
<dbReference type="Proteomes" id="UP000006859">
    <property type="component" value="Chromosome"/>
</dbReference>
<dbReference type="GO" id="GO:0022627">
    <property type="term" value="C:cytosolic small ribosomal subunit"/>
    <property type="evidence" value="ECO:0007669"/>
    <property type="project" value="TreeGrafter"/>
</dbReference>
<dbReference type="GO" id="GO:0003729">
    <property type="term" value="F:mRNA binding"/>
    <property type="evidence" value="ECO:0007669"/>
    <property type="project" value="TreeGrafter"/>
</dbReference>
<dbReference type="GO" id="GO:0003735">
    <property type="term" value="F:structural constituent of ribosome"/>
    <property type="evidence" value="ECO:0007669"/>
    <property type="project" value="InterPro"/>
</dbReference>
<dbReference type="GO" id="GO:0006412">
    <property type="term" value="P:translation"/>
    <property type="evidence" value="ECO:0007669"/>
    <property type="project" value="InterPro"/>
</dbReference>
<dbReference type="CDD" id="cd05687">
    <property type="entry name" value="S1_RPS1_repeat_ec1_hs1"/>
    <property type="match status" value="1"/>
</dbReference>
<dbReference type="CDD" id="cd04465">
    <property type="entry name" value="S1_RPS1_repeat_ec2_hs2"/>
    <property type="match status" value="1"/>
</dbReference>
<dbReference type="CDD" id="cd05688">
    <property type="entry name" value="S1_RPS1_repeat_ec3"/>
    <property type="match status" value="1"/>
</dbReference>
<dbReference type="CDD" id="cd05690">
    <property type="entry name" value="S1_RPS1_repeat_ec5"/>
    <property type="match status" value="1"/>
</dbReference>
<dbReference type="CDD" id="cd05691">
    <property type="entry name" value="S1_RPS1_repeat_ec6"/>
    <property type="match status" value="1"/>
</dbReference>
<dbReference type="FunFam" id="2.40.50.140:FF:000011">
    <property type="entry name" value="30S ribosomal protein S1"/>
    <property type="match status" value="1"/>
</dbReference>
<dbReference type="FunFam" id="2.40.50.140:FF:000016">
    <property type="entry name" value="30S ribosomal protein S1"/>
    <property type="match status" value="1"/>
</dbReference>
<dbReference type="FunFam" id="2.40.50.140:FF:000017">
    <property type="entry name" value="30S ribosomal protein S1"/>
    <property type="match status" value="1"/>
</dbReference>
<dbReference type="FunFam" id="2.40.50.140:FF:000018">
    <property type="entry name" value="30S ribosomal protein S1"/>
    <property type="match status" value="1"/>
</dbReference>
<dbReference type="FunFam" id="2.40.50.140:FF:000021">
    <property type="entry name" value="30S ribosomal protein S1"/>
    <property type="match status" value="1"/>
</dbReference>
<dbReference type="FunFam" id="2.40.50.140:FF:000036">
    <property type="entry name" value="30S ribosomal protein S1"/>
    <property type="match status" value="1"/>
</dbReference>
<dbReference type="Gene3D" id="2.40.50.140">
    <property type="entry name" value="Nucleic acid-binding proteins"/>
    <property type="match status" value="6"/>
</dbReference>
<dbReference type="InterPro" id="IPR012340">
    <property type="entry name" value="NA-bd_OB-fold"/>
</dbReference>
<dbReference type="InterPro" id="IPR050437">
    <property type="entry name" value="Ribos_protein_bS1-like"/>
</dbReference>
<dbReference type="InterPro" id="IPR000110">
    <property type="entry name" value="Ribosomal_bS1"/>
</dbReference>
<dbReference type="InterPro" id="IPR035104">
    <property type="entry name" value="Ribosomal_protein_S1-like"/>
</dbReference>
<dbReference type="InterPro" id="IPR003029">
    <property type="entry name" value="S1_domain"/>
</dbReference>
<dbReference type="NCBIfam" id="NF004951">
    <property type="entry name" value="PRK06299.1-1"/>
    <property type="match status" value="1"/>
</dbReference>
<dbReference type="NCBIfam" id="NF004952">
    <property type="entry name" value="PRK06299.1-2"/>
    <property type="match status" value="1"/>
</dbReference>
<dbReference type="NCBIfam" id="NF004954">
    <property type="entry name" value="PRK06299.1-4"/>
    <property type="match status" value="1"/>
</dbReference>
<dbReference type="NCBIfam" id="TIGR00717">
    <property type="entry name" value="rpsA"/>
    <property type="match status" value="1"/>
</dbReference>
<dbReference type="PANTHER" id="PTHR10724">
    <property type="entry name" value="30S RIBOSOMAL PROTEIN S1"/>
    <property type="match status" value="1"/>
</dbReference>
<dbReference type="PANTHER" id="PTHR10724:SF7">
    <property type="entry name" value="SMALL RIBOSOMAL SUBUNIT PROTEIN BS1C"/>
    <property type="match status" value="1"/>
</dbReference>
<dbReference type="Pfam" id="PF00575">
    <property type="entry name" value="S1"/>
    <property type="match status" value="6"/>
</dbReference>
<dbReference type="PIRSF" id="PIRSF002111">
    <property type="entry name" value="RpsA"/>
    <property type="match status" value="1"/>
</dbReference>
<dbReference type="PRINTS" id="PR00681">
    <property type="entry name" value="RIBOSOMALS1"/>
</dbReference>
<dbReference type="SMART" id="SM00316">
    <property type="entry name" value="S1"/>
    <property type="match status" value="6"/>
</dbReference>
<dbReference type="SUPFAM" id="SSF50249">
    <property type="entry name" value="Nucleic acid-binding proteins"/>
    <property type="match status" value="6"/>
</dbReference>
<dbReference type="PROSITE" id="PS50126">
    <property type="entry name" value="S1"/>
    <property type="match status" value="6"/>
</dbReference>
<gene>
    <name type="primary">rpsA</name>
    <name type="ordered locus">Dda3937_04328</name>
</gene>
<keyword id="KW-1185">Reference proteome</keyword>
<keyword id="KW-0677">Repeat</keyword>
<keyword id="KW-0687">Ribonucleoprotein</keyword>
<keyword id="KW-0689">Ribosomal protein</keyword>
<keyword id="KW-0694">RNA-binding</keyword>
<comment type="function">
    <text evidence="1">Binds mRNA; thus facilitating recognition of the initiation point. It is needed to translate mRNA with a short Shine-Dalgarno (SD) purine-rich sequence (By similarity).</text>
</comment>
<comment type="similarity">
    <text evidence="3">Belongs to the bacterial ribosomal protein bS1 family.</text>
</comment>
<name>RS1_DICD3</name>